<dbReference type="EC" id="7.1.1.-" evidence="1"/>
<dbReference type="EMBL" id="CP000647">
    <property type="protein sequence ID" value="ABR78086.1"/>
    <property type="molecule type" value="Genomic_DNA"/>
</dbReference>
<dbReference type="RefSeq" id="WP_002913148.1">
    <property type="nucleotide sequence ID" value="NC_009648.1"/>
</dbReference>
<dbReference type="SMR" id="A6TBW5"/>
<dbReference type="STRING" id="272620.KPN_02669"/>
<dbReference type="PaxDb" id="272620-KPN_02669"/>
<dbReference type="EnsemblBacteria" id="ABR78086">
    <property type="protein sequence ID" value="ABR78086"/>
    <property type="gene ID" value="KPN_02669"/>
</dbReference>
<dbReference type="GeneID" id="93272079"/>
<dbReference type="KEGG" id="kpn:KPN_02669"/>
<dbReference type="HOGENOM" id="CLU_144724_0_1_6"/>
<dbReference type="Proteomes" id="UP000000265">
    <property type="component" value="Chromosome"/>
</dbReference>
<dbReference type="GO" id="GO:0030964">
    <property type="term" value="C:NADH dehydrogenase complex"/>
    <property type="evidence" value="ECO:0007669"/>
    <property type="project" value="TreeGrafter"/>
</dbReference>
<dbReference type="GO" id="GO:0005886">
    <property type="term" value="C:plasma membrane"/>
    <property type="evidence" value="ECO:0007669"/>
    <property type="project" value="UniProtKB-SubCell"/>
</dbReference>
<dbReference type="GO" id="GO:0050136">
    <property type="term" value="F:NADH:ubiquinone reductase (non-electrogenic) activity"/>
    <property type="evidence" value="ECO:0007669"/>
    <property type="project" value="UniProtKB-UniRule"/>
</dbReference>
<dbReference type="GO" id="GO:0048038">
    <property type="term" value="F:quinone binding"/>
    <property type="evidence" value="ECO:0007669"/>
    <property type="project" value="UniProtKB-KW"/>
</dbReference>
<dbReference type="GO" id="GO:0042773">
    <property type="term" value="P:ATP synthesis coupled electron transport"/>
    <property type="evidence" value="ECO:0007669"/>
    <property type="project" value="InterPro"/>
</dbReference>
<dbReference type="FunFam" id="1.10.287.3510:FF:000001">
    <property type="entry name" value="NADH-quinone oxidoreductase subunit K"/>
    <property type="match status" value="1"/>
</dbReference>
<dbReference type="Gene3D" id="1.10.287.3510">
    <property type="match status" value="1"/>
</dbReference>
<dbReference type="HAMAP" id="MF_01456">
    <property type="entry name" value="NDH1_NuoK"/>
    <property type="match status" value="1"/>
</dbReference>
<dbReference type="InterPro" id="IPR001133">
    <property type="entry name" value="NADH_UbQ_OxRdtase_chain4L/K"/>
</dbReference>
<dbReference type="InterPro" id="IPR039428">
    <property type="entry name" value="NUOK/Mnh_C1-like"/>
</dbReference>
<dbReference type="NCBIfam" id="NF004319">
    <property type="entry name" value="PRK05715.1-1"/>
    <property type="match status" value="1"/>
</dbReference>
<dbReference type="NCBIfam" id="NF004320">
    <property type="entry name" value="PRK05715.1-2"/>
    <property type="match status" value="1"/>
</dbReference>
<dbReference type="PANTHER" id="PTHR11434:SF16">
    <property type="entry name" value="NADH-UBIQUINONE OXIDOREDUCTASE CHAIN 4L"/>
    <property type="match status" value="1"/>
</dbReference>
<dbReference type="PANTHER" id="PTHR11434">
    <property type="entry name" value="NADH-UBIQUINONE OXIDOREDUCTASE SUBUNIT ND4L"/>
    <property type="match status" value="1"/>
</dbReference>
<dbReference type="Pfam" id="PF00420">
    <property type="entry name" value="Oxidored_q2"/>
    <property type="match status" value="1"/>
</dbReference>
<gene>
    <name evidence="1" type="primary">nuoK</name>
    <name type="ordered locus">KPN78578_26250</name>
    <name type="ORF">KPN_02669</name>
</gene>
<name>NUOK_KLEP7</name>
<organism>
    <name type="scientific">Klebsiella pneumoniae subsp. pneumoniae (strain ATCC 700721 / MGH 78578)</name>
    <dbReference type="NCBI Taxonomy" id="272620"/>
    <lineage>
        <taxon>Bacteria</taxon>
        <taxon>Pseudomonadati</taxon>
        <taxon>Pseudomonadota</taxon>
        <taxon>Gammaproteobacteria</taxon>
        <taxon>Enterobacterales</taxon>
        <taxon>Enterobacteriaceae</taxon>
        <taxon>Klebsiella/Raoultella group</taxon>
        <taxon>Klebsiella</taxon>
        <taxon>Klebsiella pneumoniae complex</taxon>
    </lineage>
</organism>
<sequence length="100" mass="10798">MIPLTHGLILAAILFVLGLTGLVIRRNLLFMLISLEIMINAAALAFVVAGSYWGQADGQIMYILAISLAAAEASIGLALLLQLHRRRQNLNIDSVSELRG</sequence>
<accession>A6TBW5</accession>
<feature type="chain" id="PRO_0000390101" description="NADH-quinone oxidoreductase subunit K">
    <location>
        <begin position="1"/>
        <end position="100"/>
    </location>
</feature>
<feature type="transmembrane region" description="Helical" evidence="1">
    <location>
        <begin position="4"/>
        <end position="24"/>
    </location>
</feature>
<feature type="transmembrane region" description="Helical" evidence="1">
    <location>
        <begin position="28"/>
        <end position="48"/>
    </location>
</feature>
<feature type="transmembrane region" description="Helical" evidence="1">
    <location>
        <begin position="60"/>
        <end position="80"/>
    </location>
</feature>
<comment type="function">
    <text evidence="1">NDH-1 shuttles electrons from NADH, via FMN and iron-sulfur (Fe-S) centers, to quinones in the respiratory chain. The immediate electron acceptor for the enzyme in this species is believed to be ubiquinone. Couples the redox reaction to proton translocation (for every two electrons transferred, four hydrogen ions are translocated across the cytoplasmic membrane), and thus conserves the redox energy in a proton gradient.</text>
</comment>
<comment type="catalytic activity">
    <reaction evidence="1">
        <text>a quinone + NADH + 5 H(+)(in) = a quinol + NAD(+) + 4 H(+)(out)</text>
        <dbReference type="Rhea" id="RHEA:57888"/>
        <dbReference type="ChEBI" id="CHEBI:15378"/>
        <dbReference type="ChEBI" id="CHEBI:24646"/>
        <dbReference type="ChEBI" id="CHEBI:57540"/>
        <dbReference type="ChEBI" id="CHEBI:57945"/>
        <dbReference type="ChEBI" id="CHEBI:132124"/>
    </reaction>
</comment>
<comment type="subunit">
    <text evidence="1">NDH-1 is composed of 13 different subunits. Subunits NuoA, H, J, K, L, M, N constitute the membrane sector of the complex.</text>
</comment>
<comment type="subcellular location">
    <subcellularLocation>
        <location evidence="1">Cell inner membrane</location>
        <topology evidence="1">Multi-pass membrane protein</topology>
    </subcellularLocation>
</comment>
<comment type="similarity">
    <text evidence="1">Belongs to the complex I subunit 4L family.</text>
</comment>
<protein>
    <recommendedName>
        <fullName evidence="1">NADH-quinone oxidoreductase subunit K</fullName>
        <ecNumber evidence="1">7.1.1.-</ecNumber>
    </recommendedName>
    <alternativeName>
        <fullName evidence="1">NADH dehydrogenase I subunit K</fullName>
    </alternativeName>
    <alternativeName>
        <fullName evidence="1">NDH-1 subunit K</fullName>
    </alternativeName>
</protein>
<keyword id="KW-0997">Cell inner membrane</keyword>
<keyword id="KW-1003">Cell membrane</keyword>
<keyword id="KW-0472">Membrane</keyword>
<keyword id="KW-0520">NAD</keyword>
<keyword id="KW-0874">Quinone</keyword>
<keyword id="KW-1278">Translocase</keyword>
<keyword id="KW-0812">Transmembrane</keyword>
<keyword id="KW-1133">Transmembrane helix</keyword>
<keyword id="KW-0813">Transport</keyword>
<keyword id="KW-0830">Ubiquinone</keyword>
<reference key="1">
    <citation type="submission" date="2006-09" db="EMBL/GenBank/DDBJ databases">
        <authorList>
            <consortium name="The Klebsiella pneumonia Genome Sequencing Project"/>
            <person name="McClelland M."/>
            <person name="Sanderson E.K."/>
            <person name="Spieth J."/>
            <person name="Clifton W.S."/>
            <person name="Latreille P."/>
            <person name="Sabo A."/>
            <person name="Pepin K."/>
            <person name="Bhonagiri V."/>
            <person name="Porwollik S."/>
            <person name="Ali J."/>
            <person name="Wilson R.K."/>
        </authorList>
    </citation>
    <scope>NUCLEOTIDE SEQUENCE [LARGE SCALE GENOMIC DNA]</scope>
    <source>
        <strain>ATCC 700721 / MGH 78578</strain>
    </source>
</reference>
<evidence type="ECO:0000255" key="1">
    <source>
        <dbReference type="HAMAP-Rule" id="MF_01456"/>
    </source>
</evidence>
<proteinExistence type="inferred from homology"/>